<comment type="similarity">
    <text evidence="1">Belongs to the universal ribosomal protein uL29 family.</text>
</comment>
<protein>
    <recommendedName>
        <fullName evidence="1">Large ribosomal subunit protein uL29</fullName>
    </recommendedName>
    <alternativeName>
        <fullName evidence="2">50S ribosomal protein L29</fullName>
    </alternativeName>
</protein>
<accession>B7IHV4</accession>
<keyword id="KW-1185">Reference proteome</keyword>
<keyword id="KW-0687">Ribonucleoprotein</keyword>
<keyword id="KW-0689">Ribosomal protein</keyword>
<sequence length="66" mass="7888">MKAAELRNLTNEELMNLLEEKKRTLMNLRFQNVLGQLTDYSQISKTRKDIARIKTILRERELGVRR</sequence>
<organism>
    <name type="scientific">Thermosipho africanus (strain TCF52B)</name>
    <dbReference type="NCBI Taxonomy" id="484019"/>
    <lineage>
        <taxon>Bacteria</taxon>
        <taxon>Thermotogati</taxon>
        <taxon>Thermotogota</taxon>
        <taxon>Thermotogae</taxon>
        <taxon>Thermotogales</taxon>
        <taxon>Fervidobacteriaceae</taxon>
        <taxon>Thermosipho</taxon>
    </lineage>
</organism>
<reference key="1">
    <citation type="journal article" date="2009" name="J. Bacteriol.">
        <title>The genome of Thermosipho africanus TCF52B: lateral genetic connections to the Firmicutes and Archaea.</title>
        <authorList>
            <person name="Nesboe C.L."/>
            <person name="Bapteste E."/>
            <person name="Curtis B."/>
            <person name="Dahle H."/>
            <person name="Lopez P."/>
            <person name="Macleod D."/>
            <person name="Dlutek M."/>
            <person name="Bowman S."/>
            <person name="Zhaxybayeva O."/>
            <person name="Birkeland N.-K."/>
            <person name="Doolittle W.F."/>
        </authorList>
    </citation>
    <scope>NUCLEOTIDE SEQUENCE [LARGE SCALE GENOMIC DNA]</scope>
    <source>
        <strain>TCF52B</strain>
    </source>
</reference>
<proteinExistence type="inferred from homology"/>
<gene>
    <name evidence="1" type="primary">rpmC</name>
    <name type="ordered locus">THA_1223</name>
</gene>
<evidence type="ECO:0000255" key="1">
    <source>
        <dbReference type="HAMAP-Rule" id="MF_00374"/>
    </source>
</evidence>
<evidence type="ECO:0000305" key="2"/>
<dbReference type="EMBL" id="CP001185">
    <property type="protein sequence ID" value="ACJ75668.1"/>
    <property type="molecule type" value="Genomic_DNA"/>
</dbReference>
<dbReference type="RefSeq" id="WP_004101450.1">
    <property type="nucleotide sequence ID" value="NC_011653.1"/>
</dbReference>
<dbReference type="SMR" id="B7IHV4"/>
<dbReference type="STRING" id="484019.THA_1223"/>
<dbReference type="KEGG" id="taf:THA_1223"/>
<dbReference type="eggNOG" id="COG0255">
    <property type="taxonomic scope" value="Bacteria"/>
</dbReference>
<dbReference type="HOGENOM" id="CLU_158491_5_2_0"/>
<dbReference type="OrthoDB" id="9815192at2"/>
<dbReference type="Proteomes" id="UP000002453">
    <property type="component" value="Chromosome"/>
</dbReference>
<dbReference type="GO" id="GO:0022625">
    <property type="term" value="C:cytosolic large ribosomal subunit"/>
    <property type="evidence" value="ECO:0007669"/>
    <property type="project" value="TreeGrafter"/>
</dbReference>
<dbReference type="GO" id="GO:0003735">
    <property type="term" value="F:structural constituent of ribosome"/>
    <property type="evidence" value="ECO:0007669"/>
    <property type="project" value="InterPro"/>
</dbReference>
<dbReference type="GO" id="GO:0006412">
    <property type="term" value="P:translation"/>
    <property type="evidence" value="ECO:0007669"/>
    <property type="project" value="UniProtKB-UniRule"/>
</dbReference>
<dbReference type="CDD" id="cd00427">
    <property type="entry name" value="Ribosomal_L29_HIP"/>
    <property type="match status" value="1"/>
</dbReference>
<dbReference type="FunFam" id="1.10.287.310:FF:000001">
    <property type="entry name" value="50S ribosomal protein L29"/>
    <property type="match status" value="1"/>
</dbReference>
<dbReference type="Gene3D" id="1.10.287.310">
    <property type="match status" value="1"/>
</dbReference>
<dbReference type="HAMAP" id="MF_00374">
    <property type="entry name" value="Ribosomal_uL29"/>
    <property type="match status" value="1"/>
</dbReference>
<dbReference type="InterPro" id="IPR050063">
    <property type="entry name" value="Ribosomal_protein_uL29"/>
</dbReference>
<dbReference type="InterPro" id="IPR001854">
    <property type="entry name" value="Ribosomal_uL29"/>
</dbReference>
<dbReference type="InterPro" id="IPR036049">
    <property type="entry name" value="Ribosomal_uL29_sf"/>
</dbReference>
<dbReference type="NCBIfam" id="TIGR00012">
    <property type="entry name" value="L29"/>
    <property type="match status" value="1"/>
</dbReference>
<dbReference type="PANTHER" id="PTHR10916">
    <property type="entry name" value="60S RIBOSOMAL PROTEIN L35/50S RIBOSOMAL PROTEIN L29"/>
    <property type="match status" value="1"/>
</dbReference>
<dbReference type="PANTHER" id="PTHR10916:SF0">
    <property type="entry name" value="LARGE RIBOSOMAL SUBUNIT PROTEIN UL29C"/>
    <property type="match status" value="1"/>
</dbReference>
<dbReference type="Pfam" id="PF00831">
    <property type="entry name" value="Ribosomal_L29"/>
    <property type="match status" value="1"/>
</dbReference>
<dbReference type="SUPFAM" id="SSF46561">
    <property type="entry name" value="Ribosomal protein L29 (L29p)"/>
    <property type="match status" value="1"/>
</dbReference>
<name>RL29_THEAB</name>
<feature type="chain" id="PRO_1000121829" description="Large ribosomal subunit protein uL29">
    <location>
        <begin position="1"/>
        <end position="66"/>
    </location>
</feature>